<dbReference type="EC" id="1.14.13.-" evidence="5"/>
<dbReference type="EMBL" id="EF212873">
    <property type="protein sequence ID" value="ABQ18224.1"/>
    <property type="molecule type" value="Genomic_DNA"/>
</dbReference>
<dbReference type="RefSeq" id="WP_004877609.1">
    <property type="nucleotide sequence ID" value="NZ_PASK01000040.1"/>
</dbReference>
<dbReference type="SMR" id="A5H9N6"/>
<dbReference type="GeneID" id="58193610"/>
<dbReference type="UniPathway" id="UPA00191"/>
<dbReference type="GO" id="GO:0005886">
    <property type="term" value="C:plasma membrane"/>
    <property type="evidence" value="ECO:0007669"/>
    <property type="project" value="UniProtKB-SubCell"/>
</dbReference>
<dbReference type="GO" id="GO:0050660">
    <property type="term" value="F:flavin adenine dinucleotide binding"/>
    <property type="evidence" value="ECO:0007669"/>
    <property type="project" value="InterPro"/>
</dbReference>
<dbReference type="GO" id="GO:0004499">
    <property type="term" value="F:N,N-dimethylaniline monooxygenase activity"/>
    <property type="evidence" value="ECO:0007669"/>
    <property type="project" value="InterPro"/>
</dbReference>
<dbReference type="GO" id="GO:0050661">
    <property type="term" value="F:NADP binding"/>
    <property type="evidence" value="ECO:0007669"/>
    <property type="project" value="InterPro"/>
</dbReference>
<dbReference type="GO" id="GO:0043448">
    <property type="term" value="P:alkane catabolic process"/>
    <property type="evidence" value="ECO:0000315"/>
    <property type="project" value="UniProtKB"/>
</dbReference>
<dbReference type="FunFam" id="3.50.50.60:FF:000213">
    <property type="entry name" value="FAD-containing monooxygenase EthA"/>
    <property type="match status" value="1"/>
</dbReference>
<dbReference type="FunFam" id="3.50.50.60:FF:000228">
    <property type="entry name" value="FAD-containing monooxygenase EthA"/>
    <property type="match status" value="1"/>
</dbReference>
<dbReference type="FunFam" id="3.50.50.60:FF:000191">
    <property type="entry name" value="Monooxygenase ethA"/>
    <property type="match status" value="1"/>
</dbReference>
<dbReference type="Gene3D" id="3.50.50.60">
    <property type="entry name" value="FAD/NAD(P)-binding domain"/>
    <property type="match status" value="3"/>
</dbReference>
<dbReference type="InterPro" id="IPR051820">
    <property type="entry name" value="FAD-binding_MO"/>
</dbReference>
<dbReference type="InterPro" id="IPR036188">
    <property type="entry name" value="FAD/NAD-bd_sf"/>
</dbReference>
<dbReference type="InterPro" id="IPR020946">
    <property type="entry name" value="Flavin_mOase-like"/>
</dbReference>
<dbReference type="PANTHER" id="PTHR43872">
    <property type="entry name" value="MONOOXYGENASE, PUTATIVE (AFU_ORTHOLOGUE AFUA_8G02570)-RELATED"/>
    <property type="match status" value="1"/>
</dbReference>
<dbReference type="PANTHER" id="PTHR43872:SF1">
    <property type="entry name" value="MONOOXYGENASE, PUTATIVE (AFU_ORTHOLOGUE AFUA_8G02570)-RELATED"/>
    <property type="match status" value="1"/>
</dbReference>
<dbReference type="Pfam" id="PF00743">
    <property type="entry name" value="FMO-like"/>
    <property type="match status" value="1"/>
</dbReference>
<dbReference type="Pfam" id="PF13450">
    <property type="entry name" value="NAD_binding_8"/>
    <property type="match status" value="1"/>
</dbReference>
<dbReference type="SUPFAM" id="SSF51905">
    <property type="entry name" value="FAD/NAD(P)-binding domain"/>
    <property type="match status" value="1"/>
</dbReference>
<feature type="chain" id="PRO_0000435699" description="Probable FAD-binding monooxygenase AlmA">
    <location>
        <begin position="1"/>
        <end position="497"/>
    </location>
</feature>
<feature type="transmembrane region" description="Helical" evidence="2">
    <location>
        <begin position="4"/>
        <end position="24"/>
    </location>
</feature>
<feature type="binding site" evidence="1">
    <location>
        <position position="15"/>
    </location>
    <ligand>
        <name>FAD</name>
        <dbReference type="ChEBI" id="CHEBI:57692"/>
    </ligand>
</feature>
<feature type="binding site" evidence="1">
    <location>
        <position position="36"/>
    </location>
    <ligand>
        <name>FAD</name>
        <dbReference type="ChEBI" id="CHEBI:57692"/>
    </ligand>
</feature>
<feature type="binding site" evidence="1">
    <location>
        <begin position="54"/>
        <end position="56"/>
    </location>
    <ligand>
        <name>NADP(+)</name>
        <dbReference type="ChEBI" id="CHEBI:58349"/>
    </ligand>
</feature>
<feature type="binding site" evidence="1">
    <location>
        <position position="56"/>
    </location>
    <ligand>
        <name>FAD</name>
        <dbReference type="ChEBI" id="CHEBI:57692"/>
    </ligand>
</feature>
<feature type="binding site" evidence="1">
    <location>
        <position position="62"/>
    </location>
    <ligand>
        <name>FAD</name>
        <dbReference type="ChEBI" id="CHEBI:57692"/>
    </ligand>
</feature>
<feature type="binding site" evidence="1">
    <location>
        <position position="104"/>
    </location>
    <ligand>
        <name>FAD</name>
        <dbReference type="ChEBI" id="CHEBI:57692"/>
    </ligand>
</feature>
<feature type="binding site" evidence="1">
    <location>
        <begin position="184"/>
        <end position="190"/>
    </location>
    <ligand>
        <name>NADP(+)</name>
        <dbReference type="ChEBI" id="CHEBI:58349"/>
    </ligand>
</feature>
<feature type="binding site" evidence="1">
    <location>
        <begin position="208"/>
        <end position="209"/>
    </location>
    <ligand>
        <name>NADP(+)</name>
        <dbReference type="ChEBI" id="CHEBI:58349"/>
    </ligand>
</feature>
<feature type="binding site" evidence="1">
    <location>
        <begin position="292"/>
        <end position="293"/>
    </location>
    <ligand>
        <name>NADP(+)</name>
        <dbReference type="ChEBI" id="CHEBI:58349"/>
    </ligand>
</feature>
<feature type="binding site" evidence="1">
    <location>
        <position position="395"/>
    </location>
    <ligand>
        <name>FAD</name>
        <dbReference type="ChEBI" id="CHEBI:57692"/>
    </ligand>
</feature>
<organism>
    <name type="scientific">Acinetobacter sp</name>
    <dbReference type="NCBI Taxonomy" id="472"/>
    <lineage>
        <taxon>Bacteria</taxon>
        <taxon>Pseudomonadati</taxon>
        <taxon>Pseudomonadota</taxon>
        <taxon>Gammaproteobacteria</taxon>
        <taxon>Moraxellales</taxon>
        <taxon>Moraxellaceae</taxon>
        <taxon>Acinetobacter</taxon>
    </lineage>
</organism>
<sequence length="497" mass="55913">MEKQVDVLIIGAGISGIGLAVHLSKNCPQRKFEILERRESFGGTWDLFRYPGIRSDSDMSTFGFNFKPWAKDKVLASGAEIKGYLSDVISENQLKDKIHFGHRVLSANYDSTKKKWLVEIEDNNKKKQTWSANFVMGCTGYYNYDQGYAPKFPKQEDFKGQFIHPQHWPENLDYTGKKVVIIGSGATAITLVPSMVKGGAGHVTMLQRSPTYIATIPSIDFIYEKTRKFMSEETAYKFTRARNIGMQRGIYALAQKYPKTVRRLLLKGIELQLKGKVDMKHFTPSYNPWDQRLCVVPDGDLFKALREGQASVETDQIEKFTANGIQLKSGKHLEADIVISATGLEIQILGGVQGSIDGKPMNTSQHMLYQGVMVSDVPNMAMIIGYINASWTLKVDIAADYICRLINHMDKNGFDEVIAHADPSQRENDTIMGKMSSGYIARAADVMPKQGKQAPWKITNNYLADRKELKDAKFNDGVLEFHKRGEQTANRKPKLVS</sequence>
<keyword id="KW-1003">Cell membrane</keyword>
<keyword id="KW-0274">FAD</keyword>
<keyword id="KW-0285">Flavoprotein</keyword>
<keyword id="KW-0472">Membrane</keyword>
<keyword id="KW-0503">Monooxygenase</keyword>
<keyword id="KW-0521">NADP</keyword>
<keyword id="KW-0560">Oxidoreductase</keyword>
<keyword id="KW-0812">Transmembrane</keyword>
<keyword id="KW-1133">Transmembrane helix</keyword>
<evidence type="ECO:0000250" key="1">
    <source>
        <dbReference type="UniProtKB" id="Q47PU3"/>
    </source>
</evidence>
<evidence type="ECO:0000255" key="2"/>
<evidence type="ECO:0000269" key="3">
    <source>
    </source>
</evidence>
<evidence type="ECO:0000303" key="4">
    <source>
    </source>
</evidence>
<evidence type="ECO:0000305" key="5"/>
<reference key="1">
    <citation type="journal article" date="2007" name="Appl. Environ. Microbiol.">
        <title>Identification of novel genes involved in long-chain n-alkane degradation by Acinetobacter sp. strain DSM 17874.</title>
        <authorList>
            <person name="Throne-Holst M."/>
            <person name="Wentzel A."/>
            <person name="Ellingsen T.E."/>
            <person name="Kotlar H.K."/>
            <person name="Zotchev S.B."/>
        </authorList>
    </citation>
    <scope>NUCLEOTIDE SEQUENCE [GENOMIC DNA]</scope>
    <scope>FUNCTION</scope>
    <scope>DISRUPTION PHENOTYPE</scope>
    <scope>PATHWAY</scope>
    <source>
        <strain>ATCC 55024 / DSM 17874 / 6A2</strain>
    </source>
</reference>
<name>ALMA_ACISP</name>
<accession>A5H9N6</accession>
<comment type="function">
    <text evidence="3">Is involved in the degradation of n-alkanes with C chain lengths of 32 and longer. Allows Acinetobacter sp. strain DSM 17874 to grow on long-chain n-alkanes such as dotriacontane (C32H66) or hexatriacontane (C36H74) as a sole carbon source.</text>
</comment>
<comment type="cofactor">
    <cofactor evidence="1">
        <name>FAD</name>
        <dbReference type="ChEBI" id="CHEBI:57692"/>
    </cofactor>
    <text evidence="1">Binds 1 FAD per subunit.</text>
</comment>
<comment type="pathway">
    <text evidence="3">Hydrocarbon metabolism; alkane degradation.</text>
</comment>
<comment type="subcellular location">
    <subcellularLocation>
        <location evidence="2">Cell membrane</location>
        <topology evidence="2">Single-pass membrane protein</topology>
    </subcellularLocation>
</comment>
<comment type="disruption phenotype">
    <text evidence="3">Cells lacking this gene can no longer utilize n-alkanes with C chain lengths of 32 and 36, but can still grow with C24, C20, C16 alkanes or acetate as a sole carbon source.</text>
</comment>
<comment type="similarity">
    <text evidence="5">Belongs to the FAD-binding monooxygenase family.</text>
</comment>
<proteinExistence type="inferred from homology"/>
<gene>
    <name evidence="4" type="primary">almA</name>
</gene>
<protein>
    <recommendedName>
        <fullName evidence="5">Probable FAD-binding monooxygenase AlmA</fullName>
        <ecNumber evidence="5">1.14.13.-</ecNumber>
    </recommendedName>
    <alternativeName>
        <fullName evidence="4">n-alkane metabolism protein A</fullName>
    </alternativeName>
</protein>